<accession>Q2JLQ9</accession>
<name>PSBN_SYNJB</name>
<keyword id="KW-0472">Membrane</keyword>
<keyword id="KW-1185">Reference proteome</keyword>
<keyword id="KW-0793">Thylakoid</keyword>
<keyword id="KW-0812">Transmembrane</keyword>
<keyword id="KW-1133">Transmembrane helix</keyword>
<organism>
    <name type="scientific">Synechococcus sp. (strain JA-2-3B'a(2-13))</name>
    <name type="common">Cyanobacteria bacterium Yellowstone B-Prime</name>
    <dbReference type="NCBI Taxonomy" id="321332"/>
    <lineage>
        <taxon>Bacteria</taxon>
        <taxon>Bacillati</taxon>
        <taxon>Cyanobacteriota</taxon>
        <taxon>Cyanophyceae</taxon>
        <taxon>Synechococcales</taxon>
        <taxon>Synechococcaceae</taxon>
        <taxon>Synechococcus</taxon>
    </lineage>
</organism>
<sequence>MEPTFSLIVAIAAVTICITAFAIYTAFGPPSKDLQDPYEMHED</sequence>
<comment type="function">
    <text evidence="1">May play a role in photosystem I and II biogenesis.</text>
</comment>
<comment type="subcellular location">
    <subcellularLocation>
        <location evidence="1">Cellular thylakoid membrane</location>
        <topology evidence="1">Single-pass membrane protein</topology>
    </subcellularLocation>
</comment>
<comment type="similarity">
    <text evidence="1">Belongs to the PsbN family.</text>
</comment>
<comment type="caution">
    <text evidence="1">Originally thought to be a component of PSII; based on experiments in Synechocystis, N.tabacum and barley, and its absence from PSII in T.elongatus and T.vulcanus, this is probably not true.</text>
</comment>
<evidence type="ECO:0000255" key="1">
    <source>
        <dbReference type="HAMAP-Rule" id="MF_00293"/>
    </source>
</evidence>
<protein>
    <recommendedName>
        <fullName evidence="1">Protein PsbN</fullName>
    </recommendedName>
</protein>
<proteinExistence type="inferred from homology"/>
<gene>
    <name evidence="1" type="primary">psbN</name>
    <name type="ordered locus">CYB_1372</name>
</gene>
<feature type="chain" id="PRO_0000232790" description="Protein PsbN">
    <location>
        <begin position="1"/>
        <end position="43"/>
    </location>
</feature>
<feature type="transmembrane region" description="Helical" evidence="1">
    <location>
        <begin position="7"/>
        <end position="27"/>
    </location>
</feature>
<reference key="1">
    <citation type="journal article" date="2007" name="ISME J.">
        <title>Population level functional diversity in a microbial community revealed by comparative genomic and metagenomic analyses.</title>
        <authorList>
            <person name="Bhaya D."/>
            <person name="Grossman A.R."/>
            <person name="Steunou A.-S."/>
            <person name="Khuri N."/>
            <person name="Cohan F.M."/>
            <person name="Hamamura N."/>
            <person name="Melendrez M.C."/>
            <person name="Bateson M.M."/>
            <person name="Ward D.M."/>
            <person name="Heidelberg J.F."/>
        </authorList>
    </citation>
    <scope>NUCLEOTIDE SEQUENCE [LARGE SCALE GENOMIC DNA]</scope>
    <source>
        <strain>JA-2-3B'a(2-13)</strain>
    </source>
</reference>
<dbReference type="EMBL" id="CP000240">
    <property type="protein sequence ID" value="ABD02345.1"/>
    <property type="molecule type" value="Genomic_DNA"/>
</dbReference>
<dbReference type="RefSeq" id="WP_011432995.1">
    <property type="nucleotide sequence ID" value="NC_007776.1"/>
</dbReference>
<dbReference type="SMR" id="Q2JLQ9"/>
<dbReference type="STRING" id="321332.CYB_1372"/>
<dbReference type="KEGG" id="cyb:CYB_1372"/>
<dbReference type="HOGENOM" id="CLU_205504_1_0_3"/>
<dbReference type="Proteomes" id="UP000001938">
    <property type="component" value="Chromosome"/>
</dbReference>
<dbReference type="GO" id="GO:0031676">
    <property type="term" value="C:plasma membrane-derived thylakoid membrane"/>
    <property type="evidence" value="ECO:0007669"/>
    <property type="project" value="UniProtKB-SubCell"/>
</dbReference>
<dbReference type="GO" id="GO:0015979">
    <property type="term" value="P:photosynthesis"/>
    <property type="evidence" value="ECO:0007669"/>
    <property type="project" value="InterPro"/>
</dbReference>
<dbReference type="HAMAP" id="MF_00293">
    <property type="entry name" value="PSII_PsbN"/>
    <property type="match status" value="1"/>
</dbReference>
<dbReference type="InterPro" id="IPR003398">
    <property type="entry name" value="PSII_PsbN"/>
</dbReference>
<dbReference type="NCBIfam" id="NF009650">
    <property type="entry name" value="PRK13183.1"/>
    <property type="match status" value="1"/>
</dbReference>
<dbReference type="PANTHER" id="PTHR35326">
    <property type="entry name" value="PROTEIN PSBN"/>
    <property type="match status" value="1"/>
</dbReference>
<dbReference type="PANTHER" id="PTHR35326:SF3">
    <property type="entry name" value="PROTEIN PSBN"/>
    <property type="match status" value="1"/>
</dbReference>
<dbReference type="Pfam" id="PF02468">
    <property type="entry name" value="PsbN"/>
    <property type="match status" value="1"/>
</dbReference>